<comment type="function">
    <text evidence="1">Protein S19 forms a complex with S13 that binds strongly to the 16S ribosomal RNA.</text>
</comment>
<comment type="similarity">
    <text evidence="1">Belongs to the universal ribosomal protein uS19 family.</text>
</comment>
<keyword id="KW-0687">Ribonucleoprotein</keyword>
<keyword id="KW-0689">Ribosomal protein</keyword>
<keyword id="KW-0694">RNA-binding</keyword>
<keyword id="KW-0699">rRNA-binding</keyword>
<sequence>MARSVKKGPFCDAHLLKKVEAAAASRDKKPIKTWSRRSTILPDFIGLTIAVHNGRQHVPVYISENMVGHKLGEFALTRTFKGHAADKKAKK</sequence>
<organism>
    <name type="scientific">Burkholderia orbicola (strain MC0-3)</name>
    <dbReference type="NCBI Taxonomy" id="406425"/>
    <lineage>
        <taxon>Bacteria</taxon>
        <taxon>Pseudomonadati</taxon>
        <taxon>Pseudomonadota</taxon>
        <taxon>Betaproteobacteria</taxon>
        <taxon>Burkholderiales</taxon>
        <taxon>Burkholderiaceae</taxon>
        <taxon>Burkholderia</taxon>
        <taxon>Burkholderia cepacia complex</taxon>
        <taxon>Burkholderia orbicola</taxon>
    </lineage>
</organism>
<feature type="chain" id="PRO_1000127939" description="Small ribosomal subunit protein uS19">
    <location>
        <begin position="1"/>
        <end position="91"/>
    </location>
</feature>
<reference key="1">
    <citation type="submission" date="2008-02" db="EMBL/GenBank/DDBJ databases">
        <title>Complete sequence of chromosome 1 of Burkholderia cenocepacia MC0-3.</title>
        <authorList>
            <person name="Copeland A."/>
            <person name="Lucas S."/>
            <person name="Lapidus A."/>
            <person name="Barry K."/>
            <person name="Bruce D."/>
            <person name="Goodwin L."/>
            <person name="Glavina del Rio T."/>
            <person name="Dalin E."/>
            <person name="Tice H."/>
            <person name="Pitluck S."/>
            <person name="Chain P."/>
            <person name="Malfatti S."/>
            <person name="Shin M."/>
            <person name="Vergez L."/>
            <person name="Schmutz J."/>
            <person name="Larimer F."/>
            <person name="Land M."/>
            <person name="Hauser L."/>
            <person name="Kyrpides N."/>
            <person name="Mikhailova N."/>
            <person name="Tiedje J."/>
            <person name="Richardson P."/>
        </authorList>
    </citation>
    <scope>NUCLEOTIDE SEQUENCE [LARGE SCALE GENOMIC DNA]</scope>
    <source>
        <strain>MC0-3</strain>
    </source>
</reference>
<protein>
    <recommendedName>
        <fullName evidence="1">Small ribosomal subunit protein uS19</fullName>
    </recommendedName>
    <alternativeName>
        <fullName evidence="2">30S ribosomal protein S19</fullName>
    </alternativeName>
</protein>
<proteinExistence type="inferred from homology"/>
<name>RS19_BURO0</name>
<evidence type="ECO:0000255" key="1">
    <source>
        <dbReference type="HAMAP-Rule" id="MF_00531"/>
    </source>
</evidence>
<evidence type="ECO:0000305" key="2"/>
<dbReference type="EMBL" id="CP000958">
    <property type="protein sequence ID" value="ACA89511.1"/>
    <property type="molecule type" value="Genomic_DNA"/>
</dbReference>
<dbReference type="RefSeq" id="WP_004199273.1">
    <property type="nucleotide sequence ID" value="NC_010508.1"/>
</dbReference>
<dbReference type="SMR" id="B1JU26"/>
<dbReference type="GeneID" id="98107156"/>
<dbReference type="KEGG" id="bcm:Bcenmc03_0331"/>
<dbReference type="HOGENOM" id="CLU_144911_0_1_4"/>
<dbReference type="Proteomes" id="UP000002169">
    <property type="component" value="Chromosome 1"/>
</dbReference>
<dbReference type="GO" id="GO:0005737">
    <property type="term" value="C:cytoplasm"/>
    <property type="evidence" value="ECO:0007669"/>
    <property type="project" value="UniProtKB-ARBA"/>
</dbReference>
<dbReference type="GO" id="GO:0015935">
    <property type="term" value="C:small ribosomal subunit"/>
    <property type="evidence" value="ECO:0007669"/>
    <property type="project" value="InterPro"/>
</dbReference>
<dbReference type="GO" id="GO:0019843">
    <property type="term" value="F:rRNA binding"/>
    <property type="evidence" value="ECO:0007669"/>
    <property type="project" value="UniProtKB-UniRule"/>
</dbReference>
<dbReference type="GO" id="GO:0003735">
    <property type="term" value="F:structural constituent of ribosome"/>
    <property type="evidence" value="ECO:0007669"/>
    <property type="project" value="InterPro"/>
</dbReference>
<dbReference type="GO" id="GO:0000028">
    <property type="term" value="P:ribosomal small subunit assembly"/>
    <property type="evidence" value="ECO:0007669"/>
    <property type="project" value="TreeGrafter"/>
</dbReference>
<dbReference type="GO" id="GO:0006412">
    <property type="term" value="P:translation"/>
    <property type="evidence" value="ECO:0007669"/>
    <property type="project" value="UniProtKB-UniRule"/>
</dbReference>
<dbReference type="FunFam" id="3.30.860.10:FF:000001">
    <property type="entry name" value="30S ribosomal protein S19"/>
    <property type="match status" value="1"/>
</dbReference>
<dbReference type="Gene3D" id="3.30.860.10">
    <property type="entry name" value="30s Ribosomal Protein S19, Chain A"/>
    <property type="match status" value="1"/>
</dbReference>
<dbReference type="HAMAP" id="MF_00531">
    <property type="entry name" value="Ribosomal_uS19"/>
    <property type="match status" value="1"/>
</dbReference>
<dbReference type="InterPro" id="IPR002222">
    <property type="entry name" value="Ribosomal_uS19"/>
</dbReference>
<dbReference type="InterPro" id="IPR005732">
    <property type="entry name" value="Ribosomal_uS19_bac-type"/>
</dbReference>
<dbReference type="InterPro" id="IPR020934">
    <property type="entry name" value="Ribosomal_uS19_CS"/>
</dbReference>
<dbReference type="InterPro" id="IPR023575">
    <property type="entry name" value="Ribosomal_uS19_SF"/>
</dbReference>
<dbReference type="NCBIfam" id="TIGR01050">
    <property type="entry name" value="rpsS_bact"/>
    <property type="match status" value="1"/>
</dbReference>
<dbReference type="PANTHER" id="PTHR11880">
    <property type="entry name" value="RIBOSOMAL PROTEIN S19P FAMILY MEMBER"/>
    <property type="match status" value="1"/>
</dbReference>
<dbReference type="PANTHER" id="PTHR11880:SF8">
    <property type="entry name" value="SMALL RIBOSOMAL SUBUNIT PROTEIN US19M"/>
    <property type="match status" value="1"/>
</dbReference>
<dbReference type="Pfam" id="PF00203">
    <property type="entry name" value="Ribosomal_S19"/>
    <property type="match status" value="1"/>
</dbReference>
<dbReference type="PIRSF" id="PIRSF002144">
    <property type="entry name" value="Ribosomal_S19"/>
    <property type="match status" value="1"/>
</dbReference>
<dbReference type="PRINTS" id="PR00975">
    <property type="entry name" value="RIBOSOMALS19"/>
</dbReference>
<dbReference type="SUPFAM" id="SSF54570">
    <property type="entry name" value="Ribosomal protein S19"/>
    <property type="match status" value="1"/>
</dbReference>
<dbReference type="PROSITE" id="PS00323">
    <property type="entry name" value="RIBOSOMAL_S19"/>
    <property type="match status" value="1"/>
</dbReference>
<accession>B1JU26</accession>
<gene>
    <name evidence="1" type="primary">rpsS</name>
    <name type="ordered locus">Bcenmc03_0331</name>
</gene>